<name>ISDC_STAAS</name>
<comment type="function">
    <text evidence="1">Involved in heme (porphyrin) scavenging. Binds hemoglobin and almost exclusively free-base protoporphyrin IX. Probably has a role as the central conduit of the isd heme uptake system, i.e. mediates the transfer of the iron-containing nutrient from IsdABH to the membrane translocation system IsdDEF. Hemin-free IsdC (apo-IsdC) acquires hemin from hemin-containing IsdA (holo-IsdA) probably through the activated holo-IsdA-apo-IsdC complex and due to the higher affinity of apo-IsdC for the cofactor. The reaction is reversible (By similarity).</text>
</comment>
<comment type="subunit">
    <text evidence="1">Monomer. Interacts with IsdA (By similarity).</text>
</comment>
<comment type="subcellular location">
    <subcellularLocation>
        <location evidence="1">Secreted</location>
        <location evidence="1">Cell wall</location>
        <topology evidence="1">Peptidoglycan-anchor</topology>
    </subcellularLocation>
    <text evidence="2">Anchored to the cell wall by sortase B (By similarity).</text>
</comment>
<comment type="induction">
    <text evidence="1">Repressed by fur in the presence of iron.</text>
</comment>
<comment type="domain">
    <text evidence="1">The NEAT domain binds Fe(3+) heme iron. Reduction of the high-spin Fe(3+) heme iron to high-spin Fe(2+) results in loss of the heme from the binding site of the protein due to the absence of a proximal histidine (By similarity).</text>
</comment>
<comment type="similarity">
    <text evidence="6">Belongs to the IsdC family.</text>
</comment>
<gene>
    <name type="primary">isdC</name>
    <name type="synonym">sirD</name>
    <name type="ordered locus">SAS1065</name>
</gene>
<protein>
    <recommendedName>
        <fullName>Iron-regulated surface determinant protein C</fullName>
    </recommendedName>
    <alternativeName>
        <fullName>Staphylococcal iron-regulated protein D</fullName>
    </alternativeName>
</protein>
<dbReference type="EMBL" id="BX571857">
    <property type="protein sequence ID" value="CAG42839.1"/>
    <property type="molecule type" value="Genomic_DNA"/>
</dbReference>
<dbReference type="RefSeq" id="WP_000789821.1">
    <property type="nucleotide sequence ID" value="NC_002953.3"/>
</dbReference>
<dbReference type="SMR" id="Q6GA84"/>
<dbReference type="KEGG" id="sas:SAS1065"/>
<dbReference type="HOGENOM" id="CLU_092243_1_0_9"/>
<dbReference type="GO" id="GO:0005576">
    <property type="term" value="C:extracellular region"/>
    <property type="evidence" value="ECO:0007669"/>
    <property type="project" value="UniProtKB-KW"/>
</dbReference>
<dbReference type="GO" id="GO:0009274">
    <property type="term" value="C:peptidoglycan-based cell wall"/>
    <property type="evidence" value="ECO:0007669"/>
    <property type="project" value="InterPro"/>
</dbReference>
<dbReference type="GO" id="GO:0030492">
    <property type="term" value="F:hemoglobin binding"/>
    <property type="evidence" value="ECO:0007669"/>
    <property type="project" value="InterPro"/>
</dbReference>
<dbReference type="GO" id="GO:0046872">
    <property type="term" value="F:metal ion binding"/>
    <property type="evidence" value="ECO:0007669"/>
    <property type="project" value="UniProtKB-KW"/>
</dbReference>
<dbReference type="GO" id="GO:0015886">
    <property type="term" value="P:heme transport"/>
    <property type="evidence" value="ECO:0007669"/>
    <property type="project" value="InterPro"/>
</dbReference>
<dbReference type="CDD" id="cd06920">
    <property type="entry name" value="NEAT"/>
    <property type="match status" value="1"/>
</dbReference>
<dbReference type="Gene3D" id="2.60.40.1850">
    <property type="match status" value="1"/>
</dbReference>
<dbReference type="InterPro" id="IPR019909">
    <property type="entry name" value="Haem_uptake_protein_IsdC"/>
</dbReference>
<dbReference type="InterPro" id="IPR050436">
    <property type="entry name" value="IsdA"/>
</dbReference>
<dbReference type="InterPro" id="IPR006635">
    <property type="entry name" value="NEAT_dom"/>
</dbReference>
<dbReference type="InterPro" id="IPR037250">
    <property type="entry name" value="NEAT_dom_sf"/>
</dbReference>
<dbReference type="InterPro" id="IPR017505">
    <property type="entry name" value="Sortase_SrtB_sig_NPQTN"/>
</dbReference>
<dbReference type="NCBIfam" id="TIGR03656">
    <property type="entry name" value="IsdC"/>
    <property type="match status" value="1"/>
</dbReference>
<dbReference type="NCBIfam" id="TIGR03068">
    <property type="entry name" value="srtB_sig_NPQTN"/>
    <property type="match status" value="1"/>
</dbReference>
<dbReference type="PANTHER" id="PTHR37824">
    <property type="entry name" value="IRON-REGULATED SURFACE DETERMINANT PROTEIN C"/>
    <property type="match status" value="1"/>
</dbReference>
<dbReference type="PANTHER" id="PTHR37824:SF1">
    <property type="entry name" value="IRON-REGULATED SURFACE DETERMINANT PROTEIN C"/>
    <property type="match status" value="1"/>
</dbReference>
<dbReference type="Pfam" id="PF05031">
    <property type="entry name" value="NEAT"/>
    <property type="match status" value="1"/>
</dbReference>
<dbReference type="SMART" id="SM00725">
    <property type="entry name" value="NEAT"/>
    <property type="match status" value="1"/>
</dbReference>
<dbReference type="SUPFAM" id="SSF158911">
    <property type="entry name" value="NEAT domain-like"/>
    <property type="match status" value="1"/>
</dbReference>
<dbReference type="PROSITE" id="PS50978">
    <property type="entry name" value="NEAT"/>
    <property type="match status" value="1"/>
</dbReference>
<accession>Q6GA84</accession>
<reference key="1">
    <citation type="journal article" date="2004" name="Proc. Natl. Acad. Sci. U.S.A.">
        <title>Complete genomes of two clinical Staphylococcus aureus strains: evidence for the rapid evolution of virulence and drug resistance.</title>
        <authorList>
            <person name="Holden M.T.G."/>
            <person name="Feil E.J."/>
            <person name="Lindsay J.A."/>
            <person name="Peacock S.J."/>
            <person name="Day N.P.J."/>
            <person name="Enright M.C."/>
            <person name="Foster T.J."/>
            <person name="Moore C.E."/>
            <person name="Hurst L."/>
            <person name="Atkin R."/>
            <person name="Barron A."/>
            <person name="Bason N."/>
            <person name="Bentley S.D."/>
            <person name="Chillingworth C."/>
            <person name="Chillingworth T."/>
            <person name="Churcher C."/>
            <person name="Clark L."/>
            <person name="Corton C."/>
            <person name="Cronin A."/>
            <person name="Doggett J."/>
            <person name="Dowd L."/>
            <person name="Feltwell T."/>
            <person name="Hance Z."/>
            <person name="Harris B."/>
            <person name="Hauser H."/>
            <person name="Holroyd S."/>
            <person name="Jagels K."/>
            <person name="James K.D."/>
            <person name="Lennard N."/>
            <person name="Line A."/>
            <person name="Mayes R."/>
            <person name="Moule S."/>
            <person name="Mungall K."/>
            <person name="Ormond D."/>
            <person name="Quail M.A."/>
            <person name="Rabbinowitsch E."/>
            <person name="Rutherford K.M."/>
            <person name="Sanders M."/>
            <person name="Sharp S."/>
            <person name="Simmonds M."/>
            <person name="Stevens K."/>
            <person name="Whitehead S."/>
            <person name="Barrell B.G."/>
            <person name="Spratt B.G."/>
            <person name="Parkhill J."/>
        </authorList>
    </citation>
    <scope>NUCLEOTIDE SEQUENCE [LARGE SCALE GENOMIC DNA]</scope>
    <source>
        <strain>MSSA476</strain>
    </source>
</reference>
<proteinExistence type="inferred from homology"/>
<sequence>MKNILKVFNTTILALIIIIATFSNSANAADSGTLNYEVYKYNTNDTSIANDYFNKPAKYIKKNGKLYVQITVNHSHWITGMSIEGHKENIISKNTAKDERTSEFEVSKLNGKIDGKIDVYIDEKVNGKPFKYDHHYNITYKFNGPTDVAGANAPGKDDKNSASGSDKGSDGTTTGQSESNSSNKDKVENPQTNAGTPAYIYAIPVASLALLIAITLFVRKKSKGNVE</sequence>
<organism>
    <name type="scientific">Staphylococcus aureus (strain MSSA476)</name>
    <dbReference type="NCBI Taxonomy" id="282459"/>
    <lineage>
        <taxon>Bacteria</taxon>
        <taxon>Bacillati</taxon>
        <taxon>Bacillota</taxon>
        <taxon>Bacilli</taxon>
        <taxon>Bacillales</taxon>
        <taxon>Staphylococcaceae</taxon>
        <taxon>Staphylococcus</taxon>
    </lineage>
</organism>
<keyword id="KW-0134">Cell wall</keyword>
<keyword id="KW-0349">Heme</keyword>
<keyword id="KW-0408">Iron</keyword>
<keyword id="KW-0479">Metal-binding</keyword>
<keyword id="KW-0572">Peptidoglycan-anchor</keyword>
<keyword id="KW-0964">Secreted</keyword>
<keyword id="KW-0732">Signal</keyword>
<feature type="signal peptide" evidence="3">
    <location>
        <begin position="1"/>
        <end position="28"/>
    </location>
</feature>
<feature type="chain" id="PRO_0000019450" description="Iron-regulated surface determinant protein C">
    <location>
        <begin position="29"/>
        <end position="192"/>
    </location>
</feature>
<feature type="propeptide" id="PRO_0000019451" description="Removed by sortase B" evidence="2">
    <location>
        <begin position="193"/>
        <end position="227"/>
    </location>
</feature>
<feature type="domain" description="NEAT" evidence="4">
    <location>
        <begin position="29"/>
        <end position="150"/>
    </location>
</feature>
<feature type="region of interest" description="Disordered" evidence="5">
    <location>
        <begin position="149"/>
        <end position="191"/>
    </location>
</feature>
<feature type="short sequence motif" description="NPQTN sorting signal" evidence="2">
    <location>
        <begin position="189"/>
        <end position="193"/>
    </location>
</feature>
<feature type="compositionally biased region" description="Low complexity" evidence="5">
    <location>
        <begin position="161"/>
        <end position="175"/>
    </location>
</feature>
<feature type="binding site" evidence="2">
    <location>
        <position position="47"/>
    </location>
    <ligand>
        <name>heme</name>
        <dbReference type="ChEBI" id="CHEBI:30413"/>
    </ligand>
</feature>
<feature type="binding site" evidence="2">
    <location>
        <position position="48"/>
    </location>
    <ligand>
        <name>heme</name>
        <dbReference type="ChEBI" id="CHEBI:30413"/>
    </ligand>
</feature>
<feature type="binding site" description="axial binding residue" evidence="1">
    <location>
        <position position="132"/>
    </location>
    <ligand>
        <name>heme</name>
        <dbReference type="ChEBI" id="CHEBI:30413"/>
    </ligand>
    <ligandPart>
        <name>Fe</name>
        <dbReference type="ChEBI" id="CHEBI:18248"/>
    </ligandPart>
</feature>
<feature type="binding site" evidence="2">
    <location>
        <position position="136"/>
    </location>
    <ligand>
        <name>heme</name>
        <dbReference type="ChEBI" id="CHEBI:30413"/>
    </ligand>
</feature>
<feature type="modified residue" description="Pentaglycyl murein peptidoglycan amidated threonine" evidence="2">
    <location>
        <position position="192"/>
    </location>
</feature>
<evidence type="ECO:0000250" key="1"/>
<evidence type="ECO:0000250" key="2">
    <source>
        <dbReference type="UniProtKB" id="Q8KQR1"/>
    </source>
</evidence>
<evidence type="ECO:0000255" key="3"/>
<evidence type="ECO:0000255" key="4">
    <source>
        <dbReference type="PROSITE-ProRule" id="PRU00337"/>
    </source>
</evidence>
<evidence type="ECO:0000256" key="5">
    <source>
        <dbReference type="SAM" id="MobiDB-lite"/>
    </source>
</evidence>
<evidence type="ECO:0000305" key="6"/>